<name>STK33_BOVIN</name>
<organism>
    <name type="scientific">Bos taurus</name>
    <name type="common">Bovine</name>
    <dbReference type="NCBI Taxonomy" id="9913"/>
    <lineage>
        <taxon>Eukaryota</taxon>
        <taxon>Metazoa</taxon>
        <taxon>Chordata</taxon>
        <taxon>Craniata</taxon>
        <taxon>Vertebrata</taxon>
        <taxon>Euteleostomi</taxon>
        <taxon>Mammalia</taxon>
        <taxon>Eutheria</taxon>
        <taxon>Laurasiatheria</taxon>
        <taxon>Artiodactyla</taxon>
        <taxon>Ruminantia</taxon>
        <taxon>Pecora</taxon>
        <taxon>Bovidae</taxon>
        <taxon>Bovinae</taxon>
        <taxon>Bos</taxon>
    </lineage>
</organism>
<accession>Q0VD22</accession>
<protein>
    <recommendedName>
        <fullName>Serine/threonine-protein kinase 33</fullName>
        <ecNumber>2.7.11.1</ecNumber>
    </recommendedName>
</protein>
<reference key="1">
    <citation type="submission" date="2006-08" db="EMBL/GenBank/DDBJ databases">
        <authorList>
            <consortium name="NIH - Mammalian Gene Collection (MGC) project"/>
        </authorList>
    </citation>
    <scope>NUCLEOTIDE SEQUENCE [LARGE SCALE MRNA]</scope>
    <source>
        <strain>Hereford</strain>
        <tissue>Thalamus</tissue>
    </source>
</reference>
<gene>
    <name type="primary">STK33</name>
</gene>
<comment type="function">
    <text evidence="1">Serine/threonine protein kinase which phosphorylates vimentin/VIM. Therefore may play a specific role in the dynamic behavior of the intermediate filament cytoskeleton (By similarity).</text>
</comment>
<comment type="catalytic activity">
    <reaction>
        <text>L-seryl-[protein] + ATP = O-phospho-L-seryl-[protein] + ADP + H(+)</text>
        <dbReference type="Rhea" id="RHEA:17989"/>
        <dbReference type="Rhea" id="RHEA-COMP:9863"/>
        <dbReference type="Rhea" id="RHEA-COMP:11604"/>
        <dbReference type="ChEBI" id="CHEBI:15378"/>
        <dbReference type="ChEBI" id="CHEBI:29999"/>
        <dbReference type="ChEBI" id="CHEBI:30616"/>
        <dbReference type="ChEBI" id="CHEBI:83421"/>
        <dbReference type="ChEBI" id="CHEBI:456216"/>
        <dbReference type="EC" id="2.7.11.1"/>
    </reaction>
</comment>
<comment type="catalytic activity">
    <reaction>
        <text>L-threonyl-[protein] + ATP = O-phospho-L-threonyl-[protein] + ADP + H(+)</text>
        <dbReference type="Rhea" id="RHEA:46608"/>
        <dbReference type="Rhea" id="RHEA-COMP:11060"/>
        <dbReference type="Rhea" id="RHEA-COMP:11605"/>
        <dbReference type="ChEBI" id="CHEBI:15378"/>
        <dbReference type="ChEBI" id="CHEBI:30013"/>
        <dbReference type="ChEBI" id="CHEBI:30616"/>
        <dbReference type="ChEBI" id="CHEBI:61977"/>
        <dbReference type="ChEBI" id="CHEBI:456216"/>
        <dbReference type="EC" id="2.7.11.1"/>
    </reaction>
</comment>
<comment type="subunit">
    <text evidence="1">Interacts with vimentin/VIM.</text>
</comment>
<comment type="subcellular location">
    <subcellularLocation>
        <location evidence="1">Cytoplasm</location>
        <location evidence="1">Perinuclear region</location>
    </subcellularLocation>
</comment>
<comment type="PTM">
    <text evidence="1">Autophosphorylated.</text>
</comment>
<comment type="similarity">
    <text evidence="6">Belongs to the protein kinase superfamily. CAMK Ser/Thr protein kinase family. CaMK subfamily.</text>
</comment>
<evidence type="ECO:0000250" key="1"/>
<evidence type="ECO:0000250" key="2">
    <source>
        <dbReference type="UniProtKB" id="Q924X7"/>
    </source>
</evidence>
<evidence type="ECO:0000255" key="3">
    <source>
        <dbReference type="PROSITE-ProRule" id="PRU00159"/>
    </source>
</evidence>
<evidence type="ECO:0000255" key="4">
    <source>
        <dbReference type="PROSITE-ProRule" id="PRU10027"/>
    </source>
</evidence>
<evidence type="ECO:0000256" key="5">
    <source>
        <dbReference type="SAM" id="MobiDB-lite"/>
    </source>
</evidence>
<evidence type="ECO:0000305" key="6"/>
<proteinExistence type="evidence at transcript level"/>
<dbReference type="EC" id="2.7.11.1"/>
<dbReference type="EMBL" id="BC119877">
    <property type="protein sequence ID" value="AAI19878.1"/>
    <property type="molecule type" value="mRNA"/>
</dbReference>
<dbReference type="RefSeq" id="NP_001069376.1">
    <property type="nucleotide sequence ID" value="NM_001075908.1"/>
</dbReference>
<dbReference type="SMR" id="Q0VD22"/>
<dbReference type="FunCoup" id="Q0VD22">
    <property type="interactions" value="141"/>
</dbReference>
<dbReference type="STRING" id="9913.ENSBTAP00000042938"/>
<dbReference type="PaxDb" id="9913-ENSBTAP00000042938"/>
<dbReference type="GeneID" id="528309"/>
<dbReference type="KEGG" id="bta:528309"/>
<dbReference type="CTD" id="65975"/>
<dbReference type="eggNOG" id="KOG0032">
    <property type="taxonomic scope" value="Eukaryota"/>
</dbReference>
<dbReference type="HOGENOM" id="CLU_000288_63_0_1"/>
<dbReference type="InParanoid" id="Q0VD22"/>
<dbReference type="OrthoDB" id="541276at2759"/>
<dbReference type="TreeFam" id="TF314166"/>
<dbReference type="Proteomes" id="UP000009136">
    <property type="component" value="Unplaced"/>
</dbReference>
<dbReference type="GO" id="GO:0005634">
    <property type="term" value="C:nucleus"/>
    <property type="evidence" value="ECO:0000318"/>
    <property type="project" value="GO_Central"/>
</dbReference>
<dbReference type="GO" id="GO:0048471">
    <property type="term" value="C:perinuclear region of cytoplasm"/>
    <property type="evidence" value="ECO:0007669"/>
    <property type="project" value="UniProtKB-SubCell"/>
</dbReference>
<dbReference type="GO" id="GO:0005524">
    <property type="term" value="F:ATP binding"/>
    <property type="evidence" value="ECO:0007669"/>
    <property type="project" value="UniProtKB-KW"/>
</dbReference>
<dbReference type="GO" id="GO:0106310">
    <property type="term" value="F:protein serine kinase activity"/>
    <property type="evidence" value="ECO:0007669"/>
    <property type="project" value="RHEA"/>
</dbReference>
<dbReference type="GO" id="GO:0004674">
    <property type="term" value="F:protein serine/threonine kinase activity"/>
    <property type="evidence" value="ECO:0000318"/>
    <property type="project" value="GO_Central"/>
</dbReference>
<dbReference type="GO" id="GO:0044773">
    <property type="term" value="P:mitotic DNA damage checkpoint signaling"/>
    <property type="evidence" value="ECO:0000318"/>
    <property type="project" value="GO_Central"/>
</dbReference>
<dbReference type="FunFam" id="3.30.200.20:FF:000042">
    <property type="entry name" value="Aurora kinase A"/>
    <property type="match status" value="1"/>
</dbReference>
<dbReference type="FunFam" id="1.10.510.10:FF:000557">
    <property type="entry name" value="Serine/threonine-protein kinase 33"/>
    <property type="match status" value="1"/>
</dbReference>
<dbReference type="Gene3D" id="1.10.510.10">
    <property type="entry name" value="Transferase(Phosphotransferase) domain 1"/>
    <property type="match status" value="1"/>
</dbReference>
<dbReference type="InterPro" id="IPR011009">
    <property type="entry name" value="Kinase-like_dom_sf"/>
</dbReference>
<dbReference type="InterPro" id="IPR000719">
    <property type="entry name" value="Prot_kinase_dom"/>
</dbReference>
<dbReference type="InterPro" id="IPR017441">
    <property type="entry name" value="Protein_kinase_ATP_BS"/>
</dbReference>
<dbReference type="InterPro" id="IPR008271">
    <property type="entry name" value="Ser/Thr_kinase_AS"/>
</dbReference>
<dbReference type="PANTHER" id="PTHR24347">
    <property type="entry name" value="SERINE/THREONINE-PROTEIN KINASE"/>
    <property type="match status" value="1"/>
</dbReference>
<dbReference type="Pfam" id="PF00069">
    <property type="entry name" value="Pkinase"/>
    <property type="match status" value="1"/>
</dbReference>
<dbReference type="SMART" id="SM00220">
    <property type="entry name" value="S_TKc"/>
    <property type="match status" value="1"/>
</dbReference>
<dbReference type="SUPFAM" id="SSF56112">
    <property type="entry name" value="Protein kinase-like (PK-like)"/>
    <property type="match status" value="1"/>
</dbReference>
<dbReference type="PROSITE" id="PS00107">
    <property type="entry name" value="PROTEIN_KINASE_ATP"/>
    <property type="match status" value="1"/>
</dbReference>
<dbReference type="PROSITE" id="PS50011">
    <property type="entry name" value="PROTEIN_KINASE_DOM"/>
    <property type="match status" value="1"/>
</dbReference>
<dbReference type="PROSITE" id="PS00108">
    <property type="entry name" value="PROTEIN_KINASE_ST"/>
    <property type="match status" value="1"/>
</dbReference>
<feature type="chain" id="PRO_0000278476" description="Serine/threonine-protein kinase 33">
    <location>
        <begin position="1"/>
        <end position="486"/>
    </location>
</feature>
<feature type="domain" description="Protein kinase" evidence="3">
    <location>
        <begin position="116"/>
        <end position="381"/>
    </location>
</feature>
<feature type="region of interest" description="Disordered" evidence="5">
    <location>
        <begin position="39"/>
        <end position="100"/>
    </location>
</feature>
<feature type="region of interest" description="Disordered" evidence="5">
    <location>
        <begin position="402"/>
        <end position="451"/>
    </location>
</feature>
<feature type="compositionally biased region" description="Polar residues" evidence="5">
    <location>
        <begin position="41"/>
        <end position="53"/>
    </location>
</feature>
<feature type="compositionally biased region" description="Basic and acidic residues" evidence="5">
    <location>
        <begin position="57"/>
        <end position="66"/>
    </location>
</feature>
<feature type="compositionally biased region" description="Polar residues" evidence="5">
    <location>
        <begin position="68"/>
        <end position="80"/>
    </location>
</feature>
<feature type="compositionally biased region" description="Basic and acidic residues" evidence="5">
    <location>
        <begin position="413"/>
        <end position="426"/>
    </location>
</feature>
<feature type="compositionally biased region" description="Polar residues" evidence="5">
    <location>
        <begin position="428"/>
        <end position="440"/>
    </location>
</feature>
<feature type="active site" description="Proton acceptor" evidence="3 4">
    <location>
        <position position="238"/>
    </location>
</feature>
<feature type="binding site" evidence="3">
    <location>
        <begin position="122"/>
        <end position="130"/>
    </location>
    <ligand>
        <name>ATP</name>
        <dbReference type="ChEBI" id="CHEBI:30616"/>
    </ligand>
</feature>
<feature type="binding site" evidence="3">
    <location>
        <position position="145"/>
    </location>
    <ligand>
        <name>ATP</name>
        <dbReference type="ChEBI" id="CHEBI:30616"/>
    </ligand>
</feature>
<feature type="modified residue" description="Phosphoserine" evidence="2">
    <location>
        <position position="407"/>
    </location>
</feature>
<sequence>MADSSCGKKSTKCPHCSSASQKNALCICSCKTKLSPMSVVEMSQTSSTGSSEFIVSPEKRKEKGASKDVTSGKDSPSKSSNIERKPSQQQWGRGNFTEGKVPHIRMDNGAALQEIYTFGRILGQGSFGMVIEAIDKERETKWAIKKVNKEKAGSSAVKLLEREVDILKSVKHEHIIHLEQVFETPKKMYLVMELCEDGELKEILERKGHFSENETRWIIQSLASAIAYLHNKDIVHRDLKLENIMVKSSFIDANNEMNLNIKVTDFGLAVKKHGRSEVMLQTTCGTPIYMAPEVINAHDYSQQCDIWSIGVIMYILLCGKAPFMASSEEKLFELIKKGELHFKNSIWNSISDCAKSVLKQLMKVDPAHRITAKELLDNQWLTGNTVSSARPTNVLEMMKEWKNNPESDEESTTDQRDSRSGQEESKVYQPSRNVPDVSNSSDEEEGKQVGRTNKTCRKNNCFISPNCEIPSQHLEHFCNSFFVVGL</sequence>
<keyword id="KW-0067">ATP-binding</keyword>
<keyword id="KW-0963">Cytoplasm</keyword>
<keyword id="KW-0418">Kinase</keyword>
<keyword id="KW-0547">Nucleotide-binding</keyword>
<keyword id="KW-0597">Phosphoprotein</keyword>
<keyword id="KW-1185">Reference proteome</keyword>
<keyword id="KW-0723">Serine/threonine-protein kinase</keyword>
<keyword id="KW-0808">Transferase</keyword>